<dbReference type="EMBL" id="CP000034">
    <property type="protein sequence ID" value="ABB63794.1"/>
    <property type="molecule type" value="Genomic_DNA"/>
</dbReference>
<dbReference type="RefSeq" id="WP_000027708.1">
    <property type="nucleotide sequence ID" value="NC_007606.1"/>
</dbReference>
<dbReference type="RefSeq" id="YP_405285.1">
    <property type="nucleotide sequence ID" value="NC_007606.1"/>
</dbReference>
<dbReference type="SMR" id="Q32A61"/>
<dbReference type="STRING" id="300267.SDY_3852"/>
<dbReference type="EnsemblBacteria" id="ABB63794">
    <property type="protein sequence ID" value="ABB63794"/>
    <property type="gene ID" value="SDY_3852"/>
</dbReference>
<dbReference type="GeneID" id="93778047"/>
<dbReference type="KEGG" id="sdy:SDY_3852"/>
<dbReference type="PATRIC" id="fig|300267.13.peg.4551"/>
<dbReference type="HOGENOM" id="CLU_055275_0_0_6"/>
<dbReference type="Proteomes" id="UP000002716">
    <property type="component" value="Chromosome"/>
</dbReference>
<dbReference type="GO" id="GO:0005829">
    <property type="term" value="C:cytosol"/>
    <property type="evidence" value="ECO:0007669"/>
    <property type="project" value="TreeGrafter"/>
</dbReference>
<dbReference type="GO" id="GO:0008199">
    <property type="term" value="F:ferric iron binding"/>
    <property type="evidence" value="ECO:0007669"/>
    <property type="project" value="TreeGrafter"/>
</dbReference>
<dbReference type="GO" id="GO:0051604">
    <property type="term" value="P:protein maturation"/>
    <property type="evidence" value="ECO:0007669"/>
    <property type="project" value="TreeGrafter"/>
</dbReference>
<dbReference type="CDD" id="cd16341">
    <property type="entry name" value="FdhE"/>
    <property type="match status" value="1"/>
</dbReference>
<dbReference type="FunFam" id="3.90.1670.10:FF:000001">
    <property type="entry name" value="Protein FdhE"/>
    <property type="match status" value="1"/>
</dbReference>
<dbReference type="Gene3D" id="3.90.1670.10">
    <property type="entry name" value="FdhE-like domain"/>
    <property type="match status" value="1"/>
</dbReference>
<dbReference type="HAMAP" id="MF_00611">
    <property type="entry name" value="FdeH"/>
    <property type="match status" value="1"/>
</dbReference>
<dbReference type="InterPro" id="IPR024064">
    <property type="entry name" value="FdhE-like_sf"/>
</dbReference>
<dbReference type="InterPro" id="IPR056796">
    <property type="entry name" value="FdhE_C"/>
</dbReference>
<dbReference type="InterPro" id="IPR056797">
    <property type="entry name" value="FdhE_central"/>
</dbReference>
<dbReference type="InterPro" id="IPR056774">
    <property type="entry name" value="FdhE_N"/>
</dbReference>
<dbReference type="InterPro" id="IPR006452">
    <property type="entry name" value="Formate_DH_accessory"/>
</dbReference>
<dbReference type="NCBIfam" id="TIGR01562">
    <property type="entry name" value="FdhE"/>
    <property type="match status" value="1"/>
</dbReference>
<dbReference type="NCBIfam" id="NF002925">
    <property type="entry name" value="PRK03564.1"/>
    <property type="match status" value="1"/>
</dbReference>
<dbReference type="PANTHER" id="PTHR37689">
    <property type="entry name" value="PROTEIN FDHE"/>
    <property type="match status" value="1"/>
</dbReference>
<dbReference type="PANTHER" id="PTHR37689:SF1">
    <property type="entry name" value="PROTEIN FDHE"/>
    <property type="match status" value="1"/>
</dbReference>
<dbReference type="Pfam" id="PF24860">
    <property type="entry name" value="FdhE_C"/>
    <property type="match status" value="1"/>
</dbReference>
<dbReference type="Pfam" id="PF24859">
    <property type="entry name" value="FdhE_central"/>
    <property type="match status" value="1"/>
</dbReference>
<dbReference type="Pfam" id="PF04216">
    <property type="entry name" value="FdhE_N"/>
    <property type="match status" value="1"/>
</dbReference>
<dbReference type="PIRSF" id="PIRSF018296">
    <property type="entry name" value="Format_dh_formtn"/>
    <property type="match status" value="1"/>
</dbReference>
<dbReference type="SUPFAM" id="SSF144020">
    <property type="entry name" value="FdhE-like"/>
    <property type="match status" value="1"/>
</dbReference>
<gene>
    <name evidence="1" type="primary">fdhE</name>
    <name type="ordered locus">SDY_3852</name>
</gene>
<reference key="1">
    <citation type="journal article" date="2005" name="Nucleic Acids Res.">
        <title>Genome dynamics and diversity of Shigella species, the etiologic agents of bacillary dysentery.</title>
        <authorList>
            <person name="Yang F."/>
            <person name="Yang J."/>
            <person name="Zhang X."/>
            <person name="Chen L."/>
            <person name="Jiang Y."/>
            <person name="Yan Y."/>
            <person name="Tang X."/>
            <person name="Wang J."/>
            <person name="Xiong Z."/>
            <person name="Dong J."/>
            <person name="Xue Y."/>
            <person name="Zhu Y."/>
            <person name="Xu X."/>
            <person name="Sun L."/>
            <person name="Chen S."/>
            <person name="Nie H."/>
            <person name="Peng J."/>
            <person name="Xu J."/>
            <person name="Wang Y."/>
            <person name="Yuan Z."/>
            <person name="Wen Y."/>
            <person name="Yao Z."/>
            <person name="Shen Y."/>
            <person name="Qiang B."/>
            <person name="Hou Y."/>
            <person name="Yu J."/>
            <person name="Jin Q."/>
        </authorList>
    </citation>
    <scope>NUCLEOTIDE SEQUENCE [LARGE SCALE GENOMIC DNA]</scope>
    <source>
        <strain>Sd197</strain>
    </source>
</reference>
<protein>
    <recommendedName>
        <fullName evidence="1">Protein FdhE</fullName>
    </recommendedName>
</protein>
<sequence length="309" mass="34689">MSIRIIPQDELGSSEKRTADMIPPLLFPRLKNLYNRRAERLRELAENNPLGDYLRFAALIAHAQEVVLYDHPLEMDLTARIKEASAQGKPPLDIHVLPRDKHWQKLLMALIAELKPEMSGPALAVIENLEKASTQELEDMASALFASDFSSVSSDKAPFIWAALSLYWAQMANLIPGKARAEYGEQRQYCPVCGSMPVSSMVQIGTTQGLRYLHCNLCETEWHVVRVKCSNCEQSGKLHYWSLDDEQAAIKAESCDDCGTYLKILYQEKEPKVEAVADDLASLVLDARMEQEGYARSSINPFLFPGEGE</sequence>
<feature type="chain" id="PRO_1000056715" description="Protein FdhE">
    <location>
        <begin position="1"/>
        <end position="309"/>
    </location>
</feature>
<accession>Q32A61</accession>
<name>FDHE_SHIDS</name>
<comment type="function">
    <text evidence="1">Necessary for formate dehydrogenase activity.</text>
</comment>
<comment type="subcellular location">
    <subcellularLocation>
        <location evidence="1">Cytoplasm</location>
    </subcellularLocation>
</comment>
<comment type="similarity">
    <text evidence="1">Belongs to the FdhE family.</text>
</comment>
<organism>
    <name type="scientific">Shigella dysenteriae serotype 1 (strain Sd197)</name>
    <dbReference type="NCBI Taxonomy" id="300267"/>
    <lineage>
        <taxon>Bacteria</taxon>
        <taxon>Pseudomonadati</taxon>
        <taxon>Pseudomonadota</taxon>
        <taxon>Gammaproteobacteria</taxon>
        <taxon>Enterobacterales</taxon>
        <taxon>Enterobacteriaceae</taxon>
        <taxon>Shigella</taxon>
    </lineage>
</organism>
<evidence type="ECO:0000255" key="1">
    <source>
        <dbReference type="HAMAP-Rule" id="MF_00611"/>
    </source>
</evidence>
<keyword id="KW-0963">Cytoplasm</keyword>
<keyword id="KW-1185">Reference proteome</keyword>
<proteinExistence type="inferred from homology"/>